<dbReference type="EC" id="7.1.1.-" evidence="1"/>
<dbReference type="EMBL" id="CP000094">
    <property type="protein sequence ID" value="ABA75342.1"/>
    <property type="molecule type" value="Genomic_DNA"/>
</dbReference>
<dbReference type="RefSeq" id="WP_007951456.1">
    <property type="nucleotide sequence ID" value="NC_007492.2"/>
</dbReference>
<dbReference type="SMR" id="Q3KA62"/>
<dbReference type="KEGG" id="pfo:Pfl01_3604"/>
<dbReference type="eggNOG" id="COG0377">
    <property type="taxonomic scope" value="Bacteria"/>
</dbReference>
<dbReference type="HOGENOM" id="CLU_055737_7_3_6"/>
<dbReference type="Proteomes" id="UP000002704">
    <property type="component" value="Chromosome"/>
</dbReference>
<dbReference type="GO" id="GO:0005886">
    <property type="term" value="C:plasma membrane"/>
    <property type="evidence" value="ECO:0007669"/>
    <property type="project" value="UniProtKB-SubCell"/>
</dbReference>
<dbReference type="GO" id="GO:0045271">
    <property type="term" value="C:respiratory chain complex I"/>
    <property type="evidence" value="ECO:0007669"/>
    <property type="project" value="TreeGrafter"/>
</dbReference>
<dbReference type="GO" id="GO:0051539">
    <property type="term" value="F:4 iron, 4 sulfur cluster binding"/>
    <property type="evidence" value="ECO:0007669"/>
    <property type="project" value="UniProtKB-KW"/>
</dbReference>
<dbReference type="GO" id="GO:0005506">
    <property type="term" value="F:iron ion binding"/>
    <property type="evidence" value="ECO:0007669"/>
    <property type="project" value="UniProtKB-UniRule"/>
</dbReference>
<dbReference type="GO" id="GO:0008137">
    <property type="term" value="F:NADH dehydrogenase (ubiquinone) activity"/>
    <property type="evidence" value="ECO:0007669"/>
    <property type="project" value="InterPro"/>
</dbReference>
<dbReference type="GO" id="GO:0050136">
    <property type="term" value="F:NADH:ubiquinone reductase (non-electrogenic) activity"/>
    <property type="evidence" value="ECO:0007669"/>
    <property type="project" value="UniProtKB-UniRule"/>
</dbReference>
<dbReference type="GO" id="GO:0048038">
    <property type="term" value="F:quinone binding"/>
    <property type="evidence" value="ECO:0007669"/>
    <property type="project" value="UniProtKB-KW"/>
</dbReference>
<dbReference type="GO" id="GO:0009060">
    <property type="term" value="P:aerobic respiration"/>
    <property type="evidence" value="ECO:0007669"/>
    <property type="project" value="TreeGrafter"/>
</dbReference>
<dbReference type="GO" id="GO:0015990">
    <property type="term" value="P:electron transport coupled proton transport"/>
    <property type="evidence" value="ECO:0007669"/>
    <property type="project" value="TreeGrafter"/>
</dbReference>
<dbReference type="FunFam" id="3.40.50.12280:FF:000002">
    <property type="entry name" value="NADH-quinone oxidoreductase subunit B"/>
    <property type="match status" value="1"/>
</dbReference>
<dbReference type="Gene3D" id="3.40.50.12280">
    <property type="match status" value="1"/>
</dbReference>
<dbReference type="HAMAP" id="MF_01356">
    <property type="entry name" value="NDH1_NuoB"/>
    <property type="match status" value="1"/>
</dbReference>
<dbReference type="InterPro" id="IPR006137">
    <property type="entry name" value="NADH_UbQ_OxRdtase-like_20kDa"/>
</dbReference>
<dbReference type="InterPro" id="IPR006138">
    <property type="entry name" value="NADH_UQ_OxRdtase_20Kd_su"/>
</dbReference>
<dbReference type="NCBIfam" id="TIGR01957">
    <property type="entry name" value="nuoB_fam"/>
    <property type="match status" value="1"/>
</dbReference>
<dbReference type="NCBIfam" id="NF005012">
    <property type="entry name" value="PRK06411.1"/>
    <property type="match status" value="1"/>
</dbReference>
<dbReference type="PANTHER" id="PTHR11995">
    <property type="entry name" value="NADH DEHYDROGENASE"/>
    <property type="match status" value="1"/>
</dbReference>
<dbReference type="PANTHER" id="PTHR11995:SF14">
    <property type="entry name" value="NADH DEHYDROGENASE [UBIQUINONE] IRON-SULFUR PROTEIN 7, MITOCHONDRIAL"/>
    <property type="match status" value="1"/>
</dbReference>
<dbReference type="Pfam" id="PF01058">
    <property type="entry name" value="Oxidored_q6"/>
    <property type="match status" value="1"/>
</dbReference>
<dbReference type="SUPFAM" id="SSF56770">
    <property type="entry name" value="HydA/Nqo6-like"/>
    <property type="match status" value="1"/>
</dbReference>
<dbReference type="PROSITE" id="PS01150">
    <property type="entry name" value="COMPLEX1_20K"/>
    <property type="match status" value="1"/>
</dbReference>
<sequence length="224" mass="25340">MQYNLTRIDPDAPNEQYPIGQRETVSDPLEDQVHKNIFMGKLEDVLSGAVNWGRKNSLWPYNFGLSCCYVEMTTAFTAPHDIARFGAEVIRASPRQADFMVIAGTCFIKMAPIIQRLYEQMLEPKWVISMGSCANSGGMYDIYSVVQGVDKFLPVDVYVPGCPPRPEAFLQGLMLLQESIGQERRPLSWVVGDQGVYRADMPSQKEQRREQRIAVTNLRSPDEV</sequence>
<gene>
    <name evidence="1" type="primary">nuoB</name>
    <name type="ordered locus">Pfl01_3604</name>
</gene>
<evidence type="ECO:0000255" key="1">
    <source>
        <dbReference type="HAMAP-Rule" id="MF_01356"/>
    </source>
</evidence>
<evidence type="ECO:0000256" key="2">
    <source>
        <dbReference type="SAM" id="MobiDB-lite"/>
    </source>
</evidence>
<name>NUOB_PSEPF</name>
<accession>Q3KA62</accession>
<comment type="function">
    <text evidence="1">NDH-1 shuttles electrons from NADH, via FMN and iron-sulfur (Fe-S) centers, to quinones in the respiratory chain. The immediate electron acceptor for the enzyme in this species is believed to be ubiquinone. Couples the redox reaction to proton translocation (for every two electrons transferred, four hydrogen ions are translocated across the cytoplasmic membrane), and thus conserves the redox energy in a proton gradient.</text>
</comment>
<comment type="catalytic activity">
    <reaction evidence="1">
        <text>a quinone + NADH + 5 H(+)(in) = a quinol + NAD(+) + 4 H(+)(out)</text>
        <dbReference type="Rhea" id="RHEA:57888"/>
        <dbReference type="ChEBI" id="CHEBI:15378"/>
        <dbReference type="ChEBI" id="CHEBI:24646"/>
        <dbReference type="ChEBI" id="CHEBI:57540"/>
        <dbReference type="ChEBI" id="CHEBI:57945"/>
        <dbReference type="ChEBI" id="CHEBI:132124"/>
    </reaction>
</comment>
<comment type="cofactor">
    <cofactor evidence="1">
        <name>[4Fe-4S] cluster</name>
        <dbReference type="ChEBI" id="CHEBI:49883"/>
    </cofactor>
    <text evidence="1">Binds 1 [4Fe-4S] cluster.</text>
</comment>
<comment type="subunit">
    <text evidence="1">NDH-1 is composed of 13 different subunits. Subunits NuoB, CD, E, F, and G constitute the peripheral sector of the complex.</text>
</comment>
<comment type="subcellular location">
    <subcellularLocation>
        <location evidence="1">Cell inner membrane</location>
        <topology evidence="1">Peripheral membrane protein</topology>
        <orientation evidence="1">Cytoplasmic side</orientation>
    </subcellularLocation>
</comment>
<comment type="similarity">
    <text evidence="1">Belongs to the complex I 20 kDa subunit family.</text>
</comment>
<proteinExistence type="inferred from homology"/>
<protein>
    <recommendedName>
        <fullName evidence="1">NADH-quinone oxidoreductase subunit B</fullName>
        <ecNumber evidence="1">7.1.1.-</ecNumber>
    </recommendedName>
    <alternativeName>
        <fullName evidence="1">NADH dehydrogenase I subunit B</fullName>
    </alternativeName>
    <alternativeName>
        <fullName evidence="1">NDH-1 subunit B</fullName>
    </alternativeName>
</protein>
<feature type="chain" id="PRO_0000376312" description="NADH-quinone oxidoreductase subunit B">
    <location>
        <begin position="1"/>
        <end position="224"/>
    </location>
</feature>
<feature type="region of interest" description="Disordered" evidence="2">
    <location>
        <begin position="200"/>
        <end position="224"/>
    </location>
</feature>
<feature type="compositionally biased region" description="Basic and acidic residues" evidence="2">
    <location>
        <begin position="203"/>
        <end position="212"/>
    </location>
</feature>
<feature type="binding site" evidence="1">
    <location>
        <position position="67"/>
    </location>
    <ligand>
        <name>[4Fe-4S] cluster</name>
        <dbReference type="ChEBI" id="CHEBI:49883"/>
    </ligand>
</feature>
<feature type="binding site" evidence="1">
    <location>
        <position position="68"/>
    </location>
    <ligand>
        <name>[4Fe-4S] cluster</name>
        <dbReference type="ChEBI" id="CHEBI:49883"/>
    </ligand>
</feature>
<feature type="binding site" evidence="1">
    <location>
        <position position="133"/>
    </location>
    <ligand>
        <name>[4Fe-4S] cluster</name>
        <dbReference type="ChEBI" id="CHEBI:49883"/>
    </ligand>
</feature>
<feature type="binding site" evidence="1">
    <location>
        <position position="162"/>
    </location>
    <ligand>
        <name>[4Fe-4S] cluster</name>
        <dbReference type="ChEBI" id="CHEBI:49883"/>
    </ligand>
</feature>
<organism>
    <name type="scientific">Pseudomonas fluorescens (strain Pf0-1)</name>
    <dbReference type="NCBI Taxonomy" id="205922"/>
    <lineage>
        <taxon>Bacteria</taxon>
        <taxon>Pseudomonadati</taxon>
        <taxon>Pseudomonadota</taxon>
        <taxon>Gammaproteobacteria</taxon>
        <taxon>Pseudomonadales</taxon>
        <taxon>Pseudomonadaceae</taxon>
        <taxon>Pseudomonas</taxon>
    </lineage>
</organism>
<keyword id="KW-0004">4Fe-4S</keyword>
<keyword id="KW-0997">Cell inner membrane</keyword>
<keyword id="KW-1003">Cell membrane</keyword>
<keyword id="KW-0408">Iron</keyword>
<keyword id="KW-0411">Iron-sulfur</keyword>
<keyword id="KW-0472">Membrane</keyword>
<keyword id="KW-0479">Metal-binding</keyword>
<keyword id="KW-0520">NAD</keyword>
<keyword id="KW-0874">Quinone</keyword>
<keyword id="KW-1278">Translocase</keyword>
<keyword id="KW-0813">Transport</keyword>
<keyword id="KW-0830">Ubiquinone</keyword>
<reference key="1">
    <citation type="journal article" date="2009" name="Genome Biol.">
        <title>Genomic and genetic analyses of diversity and plant interactions of Pseudomonas fluorescens.</title>
        <authorList>
            <person name="Silby M.W."/>
            <person name="Cerdeno-Tarraga A.M."/>
            <person name="Vernikos G.S."/>
            <person name="Giddens S.R."/>
            <person name="Jackson R.W."/>
            <person name="Preston G.M."/>
            <person name="Zhang X.-X."/>
            <person name="Moon C.D."/>
            <person name="Gehrig S.M."/>
            <person name="Godfrey S.A.C."/>
            <person name="Knight C.G."/>
            <person name="Malone J.G."/>
            <person name="Robinson Z."/>
            <person name="Spiers A.J."/>
            <person name="Harris S."/>
            <person name="Challis G.L."/>
            <person name="Yaxley A.M."/>
            <person name="Harris D."/>
            <person name="Seeger K."/>
            <person name="Murphy L."/>
            <person name="Rutter S."/>
            <person name="Squares R."/>
            <person name="Quail M.A."/>
            <person name="Saunders E."/>
            <person name="Mavromatis K."/>
            <person name="Brettin T.S."/>
            <person name="Bentley S.D."/>
            <person name="Hothersall J."/>
            <person name="Stephens E."/>
            <person name="Thomas C.M."/>
            <person name="Parkhill J."/>
            <person name="Levy S.B."/>
            <person name="Rainey P.B."/>
            <person name="Thomson N.R."/>
        </authorList>
    </citation>
    <scope>NUCLEOTIDE SEQUENCE [LARGE SCALE GENOMIC DNA]</scope>
    <source>
        <strain>Pf0-1</strain>
    </source>
</reference>